<comment type="function">
    <text evidence="2">Cell wall formation.</text>
</comment>
<comment type="catalytic activity">
    <reaction evidence="2">
        <text>2 D-alanine + ATP = D-alanyl-D-alanine + ADP + phosphate + H(+)</text>
        <dbReference type="Rhea" id="RHEA:11224"/>
        <dbReference type="ChEBI" id="CHEBI:15378"/>
        <dbReference type="ChEBI" id="CHEBI:30616"/>
        <dbReference type="ChEBI" id="CHEBI:43474"/>
        <dbReference type="ChEBI" id="CHEBI:57416"/>
        <dbReference type="ChEBI" id="CHEBI:57822"/>
        <dbReference type="ChEBI" id="CHEBI:456216"/>
        <dbReference type="EC" id="6.3.2.4"/>
    </reaction>
</comment>
<comment type="cofactor">
    <cofactor evidence="1">
        <name>Mg(2+)</name>
        <dbReference type="ChEBI" id="CHEBI:18420"/>
    </cofactor>
    <cofactor evidence="1">
        <name>Mn(2+)</name>
        <dbReference type="ChEBI" id="CHEBI:29035"/>
    </cofactor>
    <text evidence="1">Binds 2 magnesium or manganese ions per subunit.</text>
</comment>
<comment type="pathway">
    <text evidence="2">Cell wall biogenesis; peptidoglycan biosynthesis.</text>
</comment>
<comment type="subcellular location">
    <subcellularLocation>
        <location evidence="2">Cytoplasm</location>
    </subcellularLocation>
</comment>
<comment type="similarity">
    <text evidence="2">Belongs to the D-alanine--D-alanine ligase family.</text>
</comment>
<feature type="chain" id="PRO_1000116638" description="D-alanine--D-alanine ligase">
    <location>
        <begin position="1"/>
        <end position="332"/>
    </location>
</feature>
<feature type="domain" description="ATP-grasp" evidence="2">
    <location>
        <begin position="124"/>
        <end position="329"/>
    </location>
</feature>
<feature type="binding site" evidence="2">
    <location>
        <begin position="154"/>
        <end position="209"/>
    </location>
    <ligand>
        <name>ATP</name>
        <dbReference type="ChEBI" id="CHEBI:30616"/>
    </ligand>
</feature>
<feature type="binding site" evidence="2">
    <location>
        <position position="283"/>
    </location>
    <ligand>
        <name>Mg(2+)</name>
        <dbReference type="ChEBI" id="CHEBI:18420"/>
        <label>1</label>
    </ligand>
</feature>
<feature type="binding site" evidence="2">
    <location>
        <position position="296"/>
    </location>
    <ligand>
        <name>Mg(2+)</name>
        <dbReference type="ChEBI" id="CHEBI:18420"/>
        <label>1</label>
    </ligand>
</feature>
<feature type="binding site" evidence="2">
    <location>
        <position position="296"/>
    </location>
    <ligand>
        <name>Mg(2+)</name>
        <dbReference type="ChEBI" id="CHEBI:18420"/>
        <label>2</label>
    </ligand>
</feature>
<feature type="binding site" evidence="2">
    <location>
        <position position="298"/>
    </location>
    <ligand>
        <name>Mg(2+)</name>
        <dbReference type="ChEBI" id="CHEBI:18420"/>
        <label>2</label>
    </ligand>
</feature>
<reference key="1">
    <citation type="journal article" date="2008" name="PLoS ONE">
        <title>Environmental adaptation: genomic analysis of the piezotolerant and psychrotolerant deep-sea iron reducing bacterium Shewanella piezotolerans WP3.</title>
        <authorList>
            <person name="Wang F."/>
            <person name="Wang J."/>
            <person name="Jian H."/>
            <person name="Zhang B."/>
            <person name="Li S."/>
            <person name="Wang F."/>
            <person name="Zeng X."/>
            <person name="Gao L."/>
            <person name="Bartlett D.H."/>
            <person name="Yu J."/>
            <person name="Hu S."/>
            <person name="Xiao X."/>
        </authorList>
    </citation>
    <scope>NUCLEOTIDE SEQUENCE [LARGE SCALE GENOMIC DNA]</scope>
    <source>
        <strain>WP3 / JCM 13877</strain>
    </source>
</reference>
<proteinExistence type="inferred from homology"/>
<name>DDL_SHEPW</name>
<protein>
    <recommendedName>
        <fullName evidence="2">D-alanine--D-alanine ligase</fullName>
        <ecNumber evidence="2">6.3.2.4</ecNumber>
    </recommendedName>
    <alternativeName>
        <fullName evidence="2">D-Ala-D-Ala ligase</fullName>
    </alternativeName>
    <alternativeName>
        <fullName evidence="2">D-alanylalanine synthetase</fullName>
    </alternativeName>
</protein>
<organism>
    <name type="scientific">Shewanella piezotolerans (strain WP3 / JCM 13877)</name>
    <dbReference type="NCBI Taxonomy" id="225849"/>
    <lineage>
        <taxon>Bacteria</taxon>
        <taxon>Pseudomonadati</taxon>
        <taxon>Pseudomonadota</taxon>
        <taxon>Gammaproteobacteria</taxon>
        <taxon>Alteromonadales</taxon>
        <taxon>Shewanellaceae</taxon>
        <taxon>Shewanella</taxon>
    </lineage>
</organism>
<gene>
    <name evidence="2" type="primary">ddl</name>
    <name type="ordered locus">swp_2771</name>
</gene>
<sequence length="332" mass="36871">MSTTNILLLCGGGGDEHAISLLSANYFETSLATLPQFNVLRVELDVNGHYRTAAGESCELNSRRQIRFDADNRAPWEVDFAIPCIHGFPGETGDIQSYFELINLPYFGCKAEASRNCFNKITAKMWFSALNIPNTPYLFLNEMSDVSIEQATNALVNWGSIFVKAASQGSSVGCYRIDNQEDVASTLAQAFTYSDYVIVEKTISARELEVAVYEIDGEIVATVPGEVICSSNNFYTFDEKYAANSKAQTQVVADISKEVSDLIRQYAISAFKGMKLRHLSRIDFFLTDDGEVLLNEINTFPGLTPISMFPKMLQNHGHSFPDYLLSNINSTD</sequence>
<evidence type="ECO:0000250" key="1"/>
<evidence type="ECO:0000255" key="2">
    <source>
        <dbReference type="HAMAP-Rule" id="MF_00047"/>
    </source>
</evidence>
<keyword id="KW-0067">ATP-binding</keyword>
<keyword id="KW-0133">Cell shape</keyword>
<keyword id="KW-0961">Cell wall biogenesis/degradation</keyword>
<keyword id="KW-0963">Cytoplasm</keyword>
<keyword id="KW-0436">Ligase</keyword>
<keyword id="KW-0460">Magnesium</keyword>
<keyword id="KW-0464">Manganese</keyword>
<keyword id="KW-0479">Metal-binding</keyword>
<keyword id="KW-0547">Nucleotide-binding</keyword>
<keyword id="KW-0573">Peptidoglycan synthesis</keyword>
<accession>B8CMV8</accession>
<dbReference type="EC" id="6.3.2.4" evidence="2"/>
<dbReference type="EMBL" id="CP000472">
    <property type="protein sequence ID" value="ACJ29498.1"/>
    <property type="molecule type" value="Genomic_DNA"/>
</dbReference>
<dbReference type="RefSeq" id="WP_020912852.1">
    <property type="nucleotide sequence ID" value="NC_011566.1"/>
</dbReference>
<dbReference type="SMR" id="B8CMV8"/>
<dbReference type="STRING" id="225849.swp_2771"/>
<dbReference type="KEGG" id="swp:swp_2771"/>
<dbReference type="eggNOG" id="COG1181">
    <property type="taxonomic scope" value="Bacteria"/>
</dbReference>
<dbReference type="HOGENOM" id="CLU_039268_0_0_6"/>
<dbReference type="OrthoDB" id="9813261at2"/>
<dbReference type="UniPathway" id="UPA00219"/>
<dbReference type="Proteomes" id="UP000000753">
    <property type="component" value="Chromosome"/>
</dbReference>
<dbReference type="GO" id="GO:0005829">
    <property type="term" value="C:cytosol"/>
    <property type="evidence" value="ECO:0007669"/>
    <property type="project" value="TreeGrafter"/>
</dbReference>
<dbReference type="GO" id="GO:0005524">
    <property type="term" value="F:ATP binding"/>
    <property type="evidence" value="ECO:0007669"/>
    <property type="project" value="UniProtKB-KW"/>
</dbReference>
<dbReference type="GO" id="GO:0008716">
    <property type="term" value="F:D-alanine-D-alanine ligase activity"/>
    <property type="evidence" value="ECO:0007669"/>
    <property type="project" value="UniProtKB-UniRule"/>
</dbReference>
<dbReference type="GO" id="GO:0046872">
    <property type="term" value="F:metal ion binding"/>
    <property type="evidence" value="ECO:0007669"/>
    <property type="project" value="UniProtKB-KW"/>
</dbReference>
<dbReference type="GO" id="GO:0071555">
    <property type="term" value="P:cell wall organization"/>
    <property type="evidence" value="ECO:0007669"/>
    <property type="project" value="UniProtKB-KW"/>
</dbReference>
<dbReference type="GO" id="GO:0009252">
    <property type="term" value="P:peptidoglycan biosynthetic process"/>
    <property type="evidence" value="ECO:0007669"/>
    <property type="project" value="UniProtKB-UniRule"/>
</dbReference>
<dbReference type="GO" id="GO:0008360">
    <property type="term" value="P:regulation of cell shape"/>
    <property type="evidence" value="ECO:0007669"/>
    <property type="project" value="UniProtKB-KW"/>
</dbReference>
<dbReference type="Gene3D" id="3.40.50.20">
    <property type="match status" value="1"/>
</dbReference>
<dbReference type="Gene3D" id="3.30.1490.20">
    <property type="entry name" value="ATP-grasp fold, A domain"/>
    <property type="match status" value="1"/>
</dbReference>
<dbReference type="Gene3D" id="3.30.470.20">
    <property type="entry name" value="ATP-grasp fold, B domain"/>
    <property type="match status" value="1"/>
</dbReference>
<dbReference type="HAMAP" id="MF_00047">
    <property type="entry name" value="Dala_Dala_lig"/>
    <property type="match status" value="1"/>
</dbReference>
<dbReference type="InterPro" id="IPR011761">
    <property type="entry name" value="ATP-grasp"/>
</dbReference>
<dbReference type="InterPro" id="IPR013815">
    <property type="entry name" value="ATP_grasp_subdomain_1"/>
</dbReference>
<dbReference type="InterPro" id="IPR000291">
    <property type="entry name" value="D-Ala_lig_Van_CS"/>
</dbReference>
<dbReference type="InterPro" id="IPR005905">
    <property type="entry name" value="D_ala_D_ala"/>
</dbReference>
<dbReference type="InterPro" id="IPR011095">
    <property type="entry name" value="Dala_Dala_lig_C"/>
</dbReference>
<dbReference type="InterPro" id="IPR011127">
    <property type="entry name" value="Dala_Dala_lig_N"/>
</dbReference>
<dbReference type="InterPro" id="IPR016185">
    <property type="entry name" value="PreATP-grasp_dom_sf"/>
</dbReference>
<dbReference type="NCBIfam" id="TIGR01205">
    <property type="entry name" value="D_ala_D_alaTIGR"/>
    <property type="match status" value="1"/>
</dbReference>
<dbReference type="NCBIfam" id="NF002527">
    <property type="entry name" value="PRK01966.1-3"/>
    <property type="match status" value="1"/>
</dbReference>
<dbReference type="NCBIfam" id="NF002528">
    <property type="entry name" value="PRK01966.1-4"/>
    <property type="match status" value="1"/>
</dbReference>
<dbReference type="PANTHER" id="PTHR23132">
    <property type="entry name" value="D-ALANINE--D-ALANINE LIGASE"/>
    <property type="match status" value="1"/>
</dbReference>
<dbReference type="PANTHER" id="PTHR23132:SF25">
    <property type="entry name" value="D-ALANINE--D-ALANINE LIGASE A"/>
    <property type="match status" value="1"/>
</dbReference>
<dbReference type="Pfam" id="PF07478">
    <property type="entry name" value="Dala_Dala_lig_C"/>
    <property type="match status" value="1"/>
</dbReference>
<dbReference type="Pfam" id="PF01820">
    <property type="entry name" value="Dala_Dala_lig_N"/>
    <property type="match status" value="1"/>
</dbReference>
<dbReference type="PIRSF" id="PIRSF039102">
    <property type="entry name" value="Ddl/VanB"/>
    <property type="match status" value="1"/>
</dbReference>
<dbReference type="SUPFAM" id="SSF56059">
    <property type="entry name" value="Glutathione synthetase ATP-binding domain-like"/>
    <property type="match status" value="1"/>
</dbReference>
<dbReference type="SUPFAM" id="SSF52440">
    <property type="entry name" value="PreATP-grasp domain"/>
    <property type="match status" value="1"/>
</dbReference>
<dbReference type="PROSITE" id="PS50975">
    <property type="entry name" value="ATP_GRASP"/>
    <property type="match status" value="1"/>
</dbReference>
<dbReference type="PROSITE" id="PS00843">
    <property type="entry name" value="DALA_DALA_LIGASE_1"/>
    <property type="match status" value="1"/>
</dbReference>
<dbReference type="PROSITE" id="PS00844">
    <property type="entry name" value="DALA_DALA_LIGASE_2"/>
    <property type="match status" value="1"/>
</dbReference>